<name>KAX2I_CENLI</name>
<sequence length="39" mass="4232">TTINVKCTSPKQCLPPCKEIYGRHAGAKCINGKCHCSKI</sequence>
<organism>
    <name type="scientific">Centruroides limpidus</name>
    <name type="common">Mexican scorpion</name>
    <dbReference type="NCBI Taxonomy" id="6876"/>
    <lineage>
        <taxon>Eukaryota</taxon>
        <taxon>Metazoa</taxon>
        <taxon>Ecdysozoa</taxon>
        <taxon>Arthropoda</taxon>
        <taxon>Chelicerata</taxon>
        <taxon>Arachnida</taxon>
        <taxon>Scorpiones</taxon>
        <taxon>Buthida</taxon>
        <taxon>Buthoidea</taxon>
        <taxon>Buthidae</taxon>
        <taxon>Centruroides</taxon>
    </lineage>
</organism>
<feature type="chain" id="PRO_0000440865" description="Potassium channel toxin alpha-KTx 2.18" evidence="4">
    <location>
        <begin position="1"/>
        <end position="39"/>
    </location>
</feature>
<feature type="site" description="Basic residue of the functional dyad" evidence="1">
    <location>
        <position position="28"/>
    </location>
</feature>
<feature type="modified residue" description="Isoleucine amide" evidence="2">
    <location>
        <position position="39"/>
    </location>
</feature>
<feature type="disulfide bond" evidence="3">
    <location>
        <begin position="7"/>
        <end position="29"/>
    </location>
</feature>
<feature type="disulfide bond" evidence="3">
    <location>
        <begin position="13"/>
        <end position="34"/>
    </location>
</feature>
<feature type="disulfide bond" evidence="3">
    <location>
        <begin position="17"/>
        <end position="36"/>
    </location>
</feature>
<comment type="function">
    <text evidence="2">Weakly blocks Kv1.3/KCNA3 voltage-gated potassium channels.</text>
</comment>
<comment type="subcellular location">
    <subcellularLocation>
        <location evidence="4">Secreted</location>
    </subcellularLocation>
</comment>
<comment type="tissue specificity">
    <text evidence="7">Expressed by the venom gland.</text>
</comment>
<comment type="domain">
    <text evidence="6">Has the structural arrangement of an alpha-helix connected to antiparallel beta-sheets by disulfide bonds (CS-alpha/beta).</text>
</comment>
<comment type="miscellaneous">
    <text evidence="4">This toxin is only found in female specimens.</text>
</comment>
<comment type="similarity">
    <text evidence="6">Belongs to the short scorpion toxin superfamily. Potassium channel inhibitor family. Alpha-KTx 02 subfamily.</text>
</comment>
<accession>P0DL70</accession>
<dbReference type="SMR" id="P0DL70"/>
<dbReference type="GO" id="GO:0005576">
    <property type="term" value="C:extracellular region"/>
    <property type="evidence" value="ECO:0007669"/>
    <property type="project" value="UniProtKB-SubCell"/>
</dbReference>
<dbReference type="GO" id="GO:0008200">
    <property type="term" value="F:ion channel inhibitor activity"/>
    <property type="evidence" value="ECO:0007669"/>
    <property type="project" value="InterPro"/>
</dbReference>
<dbReference type="GO" id="GO:0015459">
    <property type="term" value="F:potassium channel regulator activity"/>
    <property type="evidence" value="ECO:0007669"/>
    <property type="project" value="UniProtKB-KW"/>
</dbReference>
<dbReference type="GO" id="GO:0090729">
    <property type="term" value="F:toxin activity"/>
    <property type="evidence" value="ECO:0007669"/>
    <property type="project" value="UniProtKB-KW"/>
</dbReference>
<dbReference type="Gene3D" id="3.30.30.10">
    <property type="entry name" value="Knottin, scorpion toxin-like"/>
    <property type="match status" value="1"/>
</dbReference>
<dbReference type="InterPro" id="IPR036574">
    <property type="entry name" value="Scorpion_toxin-like_sf"/>
</dbReference>
<dbReference type="InterPro" id="IPR001947">
    <property type="entry name" value="Scorpion_toxinS_K_inh"/>
</dbReference>
<dbReference type="Pfam" id="PF00451">
    <property type="entry name" value="Toxin_2"/>
    <property type="match status" value="1"/>
</dbReference>
<dbReference type="PRINTS" id="PR00286">
    <property type="entry name" value="CHARYBDTOXIN"/>
</dbReference>
<dbReference type="SUPFAM" id="SSF57095">
    <property type="entry name" value="Scorpion toxin-like"/>
    <property type="match status" value="1"/>
</dbReference>
<dbReference type="PROSITE" id="PS01138">
    <property type="entry name" value="SCORP_SHORT_TOXIN"/>
    <property type="match status" value="1"/>
</dbReference>
<proteinExistence type="evidence at protein level"/>
<protein>
    <recommendedName>
        <fullName evidence="5">Potassium channel toxin alpha-KTx 2.18</fullName>
    </recommendedName>
    <alternativeName>
        <fullName evidence="5">CllTx5</fullName>
    </alternativeName>
</protein>
<reference key="1">
    <citation type="journal article" date="2017" name="Toxicon">
        <title>Comparative proteomic analysis of female and male venoms from the Mexican scorpion Centruroides limpidus: novel components found.</title>
        <authorList>
            <person name="Cid Uribe J.I."/>
            <person name="Jimenez Vargas J.M."/>
            <person name="Ferreira Batista C.V."/>
            <person name="Zamudio Zuniga F."/>
            <person name="Possani L.D."/>
        </authorList>
    </citation>
    <scope>PROTEIN SEQUENCE</scope>
    <scope>SUBCELLULAR LOCATION</scope>
    <source>
        <tissue>Venom</tissue>
    </source>
</reference>
<keyword id="KW-0027">Amidation</keyword>
<keyword id="KW-0903">Direct protein sequencing</keyword>
<keyword id="KW-1015">Disulfide bond</keyword>
<keyword id="KW-0872">Ion channel impairing toxin</keyword>
<keyword id="KW-0528">Neurotoxin</keyword>
<keyword id="KW-0632">Potassium channel impairing toxin</keyword>
<keyword id="KW-0964">Secreted</keyword>
<keyword id="KW-0800">Toxin</keyword>
<keyword id="KW-1220">Voltage-gated potassium channel impairing toxin</keyword>
<evidence type="ECO:0000250" key="1"/>
<evidence type="ECO:0000250" key="2">
    <source>
        <dbReference type="UniProtKB" id="P0C165"/>
    </source>
</evidence>
<evidence type="ECO:0000250" key="3">
    <source>
        <dbReference type="UniProtKB" id="P40755"/>
    </source>
</evidence>
<evidence type="ECO:0000269" key="4">
    <source>
    </source>
</evidence>
<evidence type="ECO:0000303" key="5">
    <source>
    </source>
</evidence>
<evidence type="ECO:0000305" key="6"/>
<evidence type="ECO:0000305" key="7">
    <source>
    </source>
</evidence>